<organism>
    <name type="scientific">Homo sapiens</name>
    <name type="common">Human</name>
    <dbReference type="NCBI Taxonomy" id="9606"/>
    <lineage>
        <taxon>Eukaryota</taxon>
        <taxon>Metazoa</taxon>
        <taxon>Chordata</taxon>
        <taxon>Craniata</taxon>
        <taxon>Vertebrata</taxon>
        <taxon>Euteleostomi</taxon>
        <taxon>Mammalia</taxon>
        <taxon>Eutheria</taxon>
        <taxon>Euarchontoglires</taxon>
        <taxon>Primates</taxon>
        <taxon>Haplorrhini</taxon>
        <taxon>Catarrhini</taxon>
        <taxon>Hominidae</taxon>
        <taxon>Homo</taxon>
    </lineage>
</organism>
<gene>
    <name type="primary">CTBP1</name>
    <name type="synonym">CTBP</name>
</gene>
<dbReference type="EC" id="1.1.1.-"/>
<dbReference type="EMBL" id="U37408">
    <property type="protein sequence ID" value="AAC62822.1"/>
    <property type="molecule type" value="mRNA"/>
</dbReference>
<dbReference type="EMBL" id="AF091555">
    <property type="protein sequence ID" value="AAD14597.1"/>
    <property type="molecule type" value="mRNA"/>
</dbReference>
<dbReference type="EMBL" id="AC092535">
    <property type="protein sequence ID" value="AAY40989.1"/>
    <property type="molecule type" value="Genomic_DNA"/>
</dbReference>
<dbReference type="EMBL" id="CH471131">
    <property type="protein sequence ID" value="EAW82599.1"/>
    <property type="molecule type" value="Genomic_DNA"/>
</dbReference>
<dbReference type="EMBL" id="CH471131">
    <property type="protein sequence ID" value="EAW82600.1"/>
    <property type="molecule type" value="Genomic_DNA"/>
</dbReference>
<dbReference type="EMBL" id="CH471131">
    <property type="protein sequence ID" value="EAW82601.1"/>
    <property type="molecule type" value="Genomic_DNA"/>
</dbReference>
<dbReference type="EMBL" id="BC011655">
    <property type="protein sequence ID" value="AAH11655.1"/>
    <property type="molecule type" value="mRNA"/>
</dbReference>
<dbReference type="EMBL" id="BC053320">
    <property type="protein sequence ID" value="AAH53320.1"/>
    <property type="molecule type" value="mRNA"/>
</dbReference>
<dbReference type="CCDS" id="CCDS3348.1">
    <molecule id="Q13363-1"/>
</dbReference>
<dbReference type="CCDS" id="CCDS43203.1">
    <molecule id="Q13363-2"/>
</dbReference>
<dbReference type="RefSeq" id="NP_001012632.1">
    <molecule id="Q13363-2"/>
    <property type="nucleotide sequence ID" value="NM_001012614.2"/>
</dbReference>
<dbReference type="RefSeq" id="NP_001319.1">
    <molecule id="Q13363-1"/>
    <property type="nucleotide sequence ID" value="NM_001328.3"/>
</dbReference>
<dbReference type="RefSeq" id="NP_001364120.1">
    <molecule id="Q13363-2"/>
    <property type="nucleotide sequence ID" value="NM_001377191.1"/>
</dbReference>
<dbReference type="RefSeq" id="NP_001364121.1">
    <molecule id="Q13363-2"/>
    <property type="nucleotide sequence ID" value="NM_001377192.1"/>
</dbReference>
<dbReference type="RefSeq" id="NP_001364122.1">
    <molecule id="Q13363-2"/>
    <property type="nucleotide sequence ID" value="NM_001377193.1"/>
</dbReference>
<dbReference type="RefSeq" id="XP_016863253.1">
    <property type="nucleotide sequence ID" value="XM_017007764.1"/>
</dbReference>
<dbReference type="RefSeq" id="XP_016863254.1">
    <property type="nucleotide sequence ID" value="XM_017007765.1"/>
</dbReference>
<dbReference type="RefSeq" id="XP_016863255.1">
    <property type="nucleotide sequence ID" value="XM_017007766.1"/>
</dbReference>
<dbReference type="RefSeq" id="XP_016863256.1">
    <property type="nucleotide sequence ID" value="XM_017007767.1"/>
</dbReference>
<dbReference type="PDB" id="1MX3">
    <property type="method" value="X-ray"/>
    <property type="resolution" value="1.95 A"/>
    <property type="chains" value="A=28-353"/>
</dbReference>
<dbReference type="PDB" id="4LCE">
    <property type="method" value="X-ray"/>
    <property type="resolution" value="2.38 A"/>
    <property type="chains" value="A=28-353"/>
</dbReference>
<dbReference type="PDB" id="4U6Q">
    <property type="method" value="X-ray"/>
    <property type="resolution" value="2.30 A"/>
    <property type="chains" value="A=28-353"/>
</dbReference>
<dbReference type="PDB" id="4U6S">
    <property type="method" value="X-ray"/>
    <property type="resolution" value="2.10 A"/>
    <property type="chains" value="A=28-353"/>
</dbReference>
<dbReference type="PDB" id="6CDF">
    <property type="method" value="X-ray"/>
    <property type="resolution" value="2.60 A"/>
    <property type="chains" value="A=28-379"/>
</dbReference>
<dbReference type="PDB" id="6CDR">
    <property type="method" value="X-ray"/>
    <property type="resolution" value="2.40 A"/>
    <property type="chains" value="A=28-379"/>
</dbReference>
<dbReference type="PDB" id="6V89">
    <property type="method" value="X-ray"/>
    <property type="resolution" value="2.45 A"/>
    <property type="chains" value="A=28-375"/>
</dbReference>
<dbReference type="PDB" id="6V8A">
    <property type="method" value="X-ray"/>
    <property type="resolution" value="2.35 A"/>
    <property type="chains" value="A=28-375"/>
</dbReference>
<dbReference type="PDB" id="7KWM">
    <property type="method" value="X-ray"/>
    <property type="resolution" value="2.30 A"/>
    <property type="chains" value="A=28-356"/>
</dbReference>
<dbReference type="PDB" id="8ARI">
    <property type="method" value="EM"/>
    <property type="resolution" value="3.00 A"/>
    <property type="chains" value="A/B/C/D/E/F/G/H/I/J/K/L/M/N/O/P/Q/R/S/T/U/V/W/X=1-440"/>
</dbReference>
<dbReference type="PDBsum" id="1MX3"/>
<dbReference type="PDBsum" id="4LCE"/>
<dbReference type="PDBsum" id="4U6Q"/>
<dbReference type="PDBsum" id="4U6S"/>
<dbReference type="PDBsum" id="6CDF"/>
<dbReference type="PDBsum" id="6CDR"/>
<dbReference type="PDBsum" id="6V89"/>
<dbReference type="PDBsum" id="6V8A"/>
<dbReference type="PDBsum" id="7KWM"/>
<dbReference type="PDBsum" id="8ARI"/>
<dbReference type="EMDB" id="EMD-15603"/>
<dbReference type="SASBDB" id="Q13363"/>
<dbReference type="SMR" id="Q13363"/>
<dbReference type="BioGRID" id="107869">
    <property type="interactions" value="442"/>
</dbReference>
<dbReference type="CORUM" id="Q13363"/>
<dbReference type="DIP" id="DIP-24245N"/>
<dbReference type="ELM" id="Q13363"/>
<dbReference type="FunCoup" id="Q13363">
    <property type="interactions" value="1867"/>
</dbReference>
<dbReference type="IntAct" id="Q13363">
    <property type="interactions" value="706"/>
</dbReference>
<dbReference type="MINT" id="Q13363"/>
<dbReference type="STRING" id="9606.ENSP00000290921"/>
<dbReference type="BindingDB" id="Q13363"/>
<dbReference type="DrugBank" id="DB01942">
    <property type="generic name" value="Formic acid"/>
</dbReference>
<dbReference type="GlyGen" id="Q13363">
    <property type="glycosylation" value="1 site, 1 O-linked glycan (1 site)"/>
</dbReference>
<dbReference type="iPTMnet" id="Q13363"/>
<dbReference type="PhosphoSitePlus" id="Q13363"/>
<dbReference type="SwissPalm" id="Q13363"/>
<dbReference type="BioMuta" id="CTBP1"/>
<dbReference type="DMDM" id="6014741"/>
<dbReference type="jPOST" id="Q13363"/>
<dbReference type="MassIVE" id="Q13363"/>
<dbReference type="PaxDb" id="9606-ENSP00000290921"/>
<dbReference type="PeptideAtlas" id="Q13363"/>
<dbReference type="ProteomicsDB" id="59349">
    <molecule id="Q13363-1"/>
</dbReference>
<dbReference type="ProteomicsDB" id="59350">
    <molecule id="Q13363-2"/>
</dbReference>
<dbReference type="Pumba" id="Q13363"/>
<dbReference type="Antibodypedia" id="3783">
    <property type="antibodies" value="683 antibodies from 44 providers"/>
</dbReference>
<dbReference type="DNASU" id="1487"/>
<dbReference type="Ensembl" id="ENST00000290921.10">
    <molecule id="Q13363-1"/>
    <property type="protein sequence ID" value="ENSP00000290921.6"/>
    <property type="gene ID" value="ENSG00000159692.18"/>
</dbReference>
<dbReference type="Ensembl" id="ENST00000382952.8">
    <molecule id="Q13363-2"/>
    <property type="protein sequence ID" value="ENSP00000372411.3"/>
    <property type="gene ID" value="ENSG00000159692.18"/>
</dbReference>
<dbReference type="Ensembl" id="ENST00000703138.1">
    <molecule id="Q13363-2"/>
    <property type="protein sequence ID" value="ENSP00000515195.1"/>
    <property type="gene ID" value="ENSG00000159692.18"/>
</dbReference>
<dbReference type="Ensembl" id="ENST00000703163.1">
    <molecule id="Q13363-2"/>
    <property type="protein sequence ID" value="ENSP00000515211.1"/>
    <property type="gene ID" value="ENSG00000159692.18"/>
</dbReference>
<dbReference type="GeneID" id="1487"/>
<dbReference type="KEGG" id="hsa:1487"/>
<dbReference type="MANE-Select" id="ENST00000382952.8">
    <molecule id="Q13363-2"/>
    <property type="protein sequence ID" value="ENSP00000372411.3"/>
    <property type="RefSeq nucleotide sequence ID" value="NM_001012614.2"/>
    <property type="RefSeq protein sequence ID" value="NP_001012632.1"/>
</dbReference>
<dbReference type="UCSC" id="uc003gcu.2">
    <molecule id="Q13363-1"/>
    <property type="organism name" value="human"/>
</dbReference>
<dbReference type="AGR" id="HGNC:2494"/>
<dbReference type="CTD" id="1487"/>
<dbReference type="DisGeNET" id="1487"/>
<dbReference type="GeneCards" id="CTBP1"/>
<dbReference type="HGNC" id="HGNC:2494">
    <property type="gene designation" value="CTBP1"/>
</dbReference>
<dbReference type="HPA" id="ENSG00000159692">
    <property type="expression patterns" value="Low tissue specificity"/>
</dbReference>
<dbReference type="MalaCards" id="CTBP1"/>
<dbReference type="MIM" id="602618">
    <property type="type" value="gene"/>
</dbReference>
<dbReference type="MIM" id="617915">
    <property type="type" value="phenotype"/>
</dbReference>
<dbReference type="neXtProt" id="NX_Q13363"/>
<dbReference type="OpenTargets" id="ENSG00000159692"/>
<dbReference type="Orphanet" id="280">
    <property type="disease" value="Wolf-Hirschhorn syndrome"/>
</dbReference>
<dbReference type="PharmGKB" id="PA26995"/>
<dbReference type="VEuPathDB" id="HostDB:ENSG00000159692"/>
<dbReference type="eggNOG" id="KOG0067">
    <property type="taxonomic scope" value="Eukaryota"/>
</dbReference>
<dbReference type="GeneTree" id="ENSGT00940000157061"/>
<dbReference type="HOGENOM" id="CLU_019796_1_3_1"/>
<dbReference type="InParanoid" id="Q13363"/>
<dbReference type="OMA" id="RGVTVCN"/>
<dbReference type="OrthoDB" id="9991913at2759"/>
<dbReference type="PAN-GO" id="Q13363">
    <property type="GO annotations" value="6 GO annotations based on evolutionary models"/>
</dbReference>
<dbReference type="PhylomeDB" id="Q13363"/>
<dbReference type="TreeFam" id="TF313593"/>
<dbReference type="BioCyc" id="MetaCyc:ENSG00000159692-MONOMER"/>
<dbReference type="PathwayCommons" id="Q13363"/>
<dbReference type="Reactome" id="R-HSA-3769402">
    <property type="pathway name" value="Deactivation of the beta-catenin transactivating complex"/>
</dbReference>
<dbReference type="Reactome" id="R-HSA-3899300">
    <property type="pathway name" value="SUMOylation of transcription cofactors"/>
</dbReference>
<dbReference type="Reactome" id="R-HSA-4641265">
    <property type="pathway name" value="Repression of WNT target genes"/>
</dbReference>
<dbReference type="Reactome" id="R-HSA-5339700">
    <property type="pathway name" value="Signaling by TCF7L2 mutants"/>
</dbReference>
<dbReference type="SignaLink" id="Q13363"/>
<dbReference type="SIGNOR" id="Q13363"/>
<dbReference type="BioGRID-ORCS" id="1487">
    <property type="hits" value="30 hits in 1166 CRISPR screens"/>
</dbReference>
<dbReference type="CD-CODE" id="8C2F96ED">
    <property type="entry name" value="Centrosome"/>
</dbReference>
<dbReference type="CD-CODE" id="FB4E32DD">
    <property type="entry name" value="Presynaptic clusters and postsynaptic densities"/>
</dbReference>
<dbReference type="ChiTaRS" id="CTBP1">
    <property type="organism name" value="human"/>
</dbReference>
<dbReference type="EvolutionaryTrace" id="Q13363"/>
<dbReference type="GeneWiki" id="CTBP1"/>
<dbReference type="GenomeRNAi" id="1487"/>
<dbReference type="Pharos" id="Q13363">
    <property type="development level" value="Tbio"/>
</dbReference>
<dbReference type="PRO" id="PR:Q13363"/>
<dbReference type="Proteomes" id="UP000005640">
    <property type="component" value="Chromosome 4"/>
</dbReference>
<dbReference type="RNAct" id="Q13363">
    <property type="molecule type" value="protein"/>
</dbReference>
<dbReference type="Bgee" id="ENSG00000159692">
    <property type="expression patterns" value="Expressed in tendon of biceps brachii and 208 other cell types or tissues"/>
</dbReference>
<dbReference type="ExpressionAtlas" id="Q13363">
    <property type="expression patterns" value="baseline and differential"/>
</dbReference>
<dbReference type="GO" id="GO:0098982">
    <property type="term" value="C:GABA-ergic synapse"/>
    <property type="evidence" value="ECO:0007669"/>
    <property type="project" value="Ensembl"/>
</dbReference>
<dbReference type="GO" id="GO:0098978">
    <property type="term" value="C:glutamatergic synapse"/>
    <property type="evidence" value="ECO:0007669"/>
    <property type="project" value="Ensembl"/>
</dbReference>
<dbReference type="GO" id="GO:0005654">
    <property type="term" value="C:nucleoplasm"/>
    <property type="evidence" value="ECO:0000314"/>
    <property type="project" value="HPA"/>
</dbReference>
<dbReference type="GO" id="GO:0005634">
    <property type="term" value="C:nucleus"/>
    <property type="evidence" value="ECO:0000314"/>
    <property type="project" value="UniProtKB"/>
</dbReference>
<dbReference type="GO" id="GO:0098831">
    <property type="term" value="C:presynaptic active zone cytoplasmic component"/>
    <property type="evidence" value="ECO:0007669"/>
    <property type="project" value="Ensembl"/>
</dbReference>
<dbReference type="GO" id="GO:0017053">
    <property type="term" value="C:transcription repressor complex"/>
    <property type="evidence" value="ECO:0000314"/>
    <property type="project" value="BHF-UCL"/>
</dbReference>
<dbReference type="GO" id="GO:0003682">
    <property type="term" value="F:chromatin binding"/>
    <property type="evidence" value="ECO:0007669"/>
    <property type="project" value="Ensembl"/>
</dbReference>
<dbReference type="GO" id="GO:0140297">
    <property type="term" value="F:DNA-binding transcription factor binding"/>
    <property type="evidence" value="ECO:0000353"/>
    <property type="project" value="UniProtKB"/>
</dbReference>
<dbReference type="GO" id="GO:0042802">
    <property type="term" value="F:identical protein binding"/>
    <property type="evidence" value="ECO:0000353"/>
    <property type="project" value="IntAct"/>
</dbReference>
<dbReference type="GO" id="GO:0106222">
    <property type="term" value="F:lncRNA binding"/>
    <property type="evidence" value="ECO:0007669"/>
    <property type="project" value="Ensembl"/>
</dbReference>
<dbReference type="GO" id="GO:0051287">
    <property type="term" value="F:NAD binding"/>
    <property type="evidence" value="ECO:0000314"/>
    <property type="project" value="UniProtKB"/>
</dbReference>
<dbReference type="GO" id="GO:0016616">
    <property type="term" value="F:oxidoreductase activity, acting on the CH-OH group of donors, NAD or NADP as acceptor"/>
    <property type="evidence" value="ECO:0000314"/>
    <property type="project" value="UniProtKB"/>
</dbReference>
<dbReference type="GO" id="GO:0019904">
    <property type="term" value="F:protein domain specific binding"/>
    <property type="evidence" value="ECO:0000314"/>
    <property type="project" value="BHF-UCL"/>
</dbReference>
<dbReference type="GO" id="GO:0061629">
    <property type="term" value="F:RNA polymerase II-specific DNA-binding transcription factor binding"/>
    <property type="evidence" value="ECO:0007669"/>
    <property type="project" value="Ensembl"/>
</dbReference>
<dbReference type="GO" id="GO:0003713">
    <property type="term" value="F:transcription coactivator activity"/>
    <property type="evidence" value="ECO:0000318"/>
    <property type="project" value="GO_Central"/>
</dbReference>
<dbReference type="GO" id="GO:0001221">
    <property type="term" value="F:transcription coregulator binding"/>
    <property type="evidence" value="ECO:0000318"/>
    <property type="project" value="GO_Central"/>
</dbReference>
<dbReference type="GO" id="GO:0003714">
    <property type="term" value="F:transcription corepressor activity"/>
    <property type="evidence" value="ECO:0000314"/>
    <property type="project" value="BHF-UCL"/>
</dbReference>
<dbReference type="GO" id="GO:0001222">
    <property type="term" value="F:transcription corepressor binding"/>
    <property type="evidence" value="ECO:0000353"/>
    <property type="project" value="ARUK-UCL"/>
</dbReference>
<dbReference type="GO" id="GO:0008285">
    <property type="term" value="P:negative regulation of cell population proliferation"/>
    <property type="evidence" value="ECO:0000304"/>
    <property type="project" value="ProtInc"/>
</dbReference>
<dbReference type="GO" id="GO:0045892">
    <property type="term" value="P:negative regulation of DNA-templated transcription"/>
    <property type="evidence" value="ECO:0000250"/>
    <property type="project" value="UniProtKB"/>
</dbReference>
<dbReference type="GO" id="GO:0000122">
    <property type="term" value="P:negative regulation of transcription by RNA polymerase II"/>
    <property type="evidence" value="ECO:0000315"/>
    <property type="project" value="BHF-UCL"/>
</dbReference>
<dbReference type="GO" id="GO:0007219">
    <property type="term" value="P:Notch signaling pathway"/>
    <property type="evidence" value="ECO:0007669"/>
    <property type="project" value="Ensembl"/>
</dbReference>
<dbReference type="GO" id="GO:0006468">
    <property type="term" value="P:protein phosphorylation"/>
    <property type="evidence" value="ECO:0000304"/>
    <property type="project" value="ProtInc"/>
</dbReference>
<dbReference type="GO" id="GO:0051726">
    <property type="term" value="P:regulation of cell cycle"/>
    <property type="evidence" value="ECO:0000315"/>
    <property type="project" value="BHF-UCL"/>
</dbReference>
<dbReference type="GO" id="GO:0006357">
    <property type="term" value="P:regulation of transcription by RNA polymerase II"/>
    <property type="evidence" value="ECO:0000318"/>
    <property type="project" value="GO_Central"/>
</dbReference>
<dbReference type="GO" id="GO:0097091">
    <property type="term" value="P:synaptic vesicle clustering"/>
    <property type="evidence" value="ECO:0007669"/>
    <property type="project" value="Ensembl"/>
</dbReference>
<dbReference type="GO" id="GO:0048488">
    <property type="term" value="P:synaptic vesicle endocytosis"/>
    <property type="evidence" value="ECO:0007669"/>
    <property type="project" value="Ensembl"/>
</dbReference>
<dbReference type="GO" id="GO:0019079">
    <property type="term" value="P:viral genome replication"/>
    <property type="evidence" value="ECO:0000304"/>
    <property type="project" value="ProtInc"/>
</dbReference>
<dbReference type="GO" id="GO:0050872">
    <property type="term" value="P:white fat cell differentiation"/>
    <property type="evidence" value="ECO:0000250"/>
    <property type="project" value="UniProtKB"/>
</dbReference>
<dbReference type="CDD" id="cd05299">
    <property type="entry name" value="CtBP_dh"/>
    <property type="match status" value="1"/>
</dbReference>
<dbReference type="FunFam" id="3.40.50.720:FF:000012">
    <property type="entry name" value="C-terminal-binding protein 2 isoform 1"/>
    <property type="match status" value="1"/>
</dbReference>
<dbReference type="Gene3D" id="3.40.50.720">
    <property type="entry name" value="NAD(P)-binding Rossmann-like Domain"/>
    <property type="match status" value="2"/>
</dbReference>
<dbReference type="IDEAL" id="IID00469"/>
<dbReference type="InterPro" id="IPR043322">
    <property type="entry name" value="CtBP"/>
</dbReference>
<dbReference type="InterPro" id="IPR051638">
    <property type="entry name" value="CTBP_dehydrogenase"/>
</dbReference>
<dbReference type="InterPro" id="IPR006139">
    <property type="entry name" value="D-isomer_2_OHA_DH_cat_dom"/>
</dbReference>
<dbReference type="InterPro" id="IPR029753">
    <property type="entry name" value="D-isomer_DH_CS"/>
</dbReference>
<dbReference type="InterPro" id="IPR029752">
    <property type="entry name" value="D-isomer_DH_CS1"/>
</dbReference>
<dbReference type="InterPro" id="IPR006140">
    <property type="entry name" value="D-isomer_DH_NAD-bd"/>
</dbReference>
<dbReference type="InterPro" id="IPR036291">
    <property type="entry name" value="NAD(P)-bd_dom_sf"/>
</dbReference>
<dbReference type="PANTHER" id="PTHR46029">
    <property type="entry name" value="C-TERMINAL-BINDING PROTEIN"/>
    <property type="match status" value="1"/>
</dbReference>
<dbReference type="PANTHER" id="PTHR46029:SF2">
    <property type="entry name" value="C-TERMINAL-BINDING PROTEIN 1"/>
    <property type="match status" value="1"/>
</dbReference>
<dbReference type="Pfam" id="PF00389">
    <property type="entry name" value="2-Hacid_dh"/>
    <property type="match status" value="1"/>
</dbReference>
<dbReference type="Pfam" id="PF02826">
    <property type="entry name" value="2-Hacid_dh_C"/>
    <property type="match status" value="1"/>
</dbReference>
<dbReference type="SUPFAM" id="SSF52283">
    <property type="entry name" value="Formate/glycerate dehydrogenase catalytic domain-like"/>
    <property type="match status" value="1"/>
</dbReference>
<dbReference type="SUPFAM" id="SSF51735">
    <property type="entry name" value="NAD(P)-binding Rossmann-fold domains"/>
    <property type="match status" value="1"/>
</dbReference>
<dbReference type="PROSITE" id="PS00065">
    <property type="entry name" value="D_2_HYDROXYACID_DH_1"/>
    <property type="match status" value="1"/>
</dbReference>
<dbReference type="PROSITE" id="PS00671">
    <property type="entry name" value="D_2_HYDROXYACID_DH_3"/>
    <property type="match status" value="1"/>
</dbReference>
<reference key="1">
    <citation type="journal article" date="1995" name="Proc. Natl. Acad. Sci. U.S.A.">
        <title>Molecular cloning and characterization of a cellular phosphoprotein that interacts with a conserved C-terminal domain of adenovirus E1A involved in negative modulation of oncogenic transformation.</title>
        <authorList>
            <person name="Schaeper U."/>
            <person name="Boyd J.M."/>
            <person name="Verma S."/>
            <person name="Uhlmann E."/>
            <person name="Subramanian T."/>
            <person name="Chinnadurai G."/>
        </authorList>
    </citation>
    <scope>NUCLEOTIDE SEQUENCE [MRNA] (ISOFORM 1)</scope>
    <scope>PROTEIN SEQUENCE OF 98-108</scope>
    <scope>INTERACTION WITH RBBP8 AND ADENOVIRUS E1A</scope>
    <source>
        <tissue>B-cell</tissue>
        <tissue>Cervix carcinoma</tissue>
    </source>
</reference>
<reference key="2">
    <citation type="journal article" date="1999" name="Mol. Cell. Biol.">
        <title>C-terminal binding protein is a transcriptional repressor that interacts with a specific class of vertebrate polycomb proteins.</title>
        <authorList>
            <person name="Sewalt R.G.A.B."/>
            <person name="Gunster M.J."/>
            <person name="van der Vlag J."/>
            <person name="Satijn D.P.E."/>
            <person name="Otte A.P."/>
        </authorList>
    </citation>
    <scope>NUCLEOTIDE SEQUENCE [MRNA] (ISOFORM 1)</scope>
    <scope>SEQUENCE REVISION</scope>
    <scope>FUNCTION</scope>
</reference>
<reference key="3">
    <citation type="journal article" date="2005" name="Nature">
        <title>Generation and annotation of the DNA sequences of human chromosomes 2 and 4.</title>
        <authorList>
            <person name="Hillier L.W."/>
            <person name="Graves T.A."/>
            <person name="Fulton R.S."/>
            <person name="Fulton L.A."/>
            <person name="Pepin K.H."/>
            <person name="Minx P."/>
            <person name="Wagner-McPherson C."/>
            <person name="Layman D."/>
            <person name="Wylie K."/>
            <person name="Sekhon M."/>
            <person name="Becker M.C."/>
            <person name="Fewell G.A."/>
            <person name="Delehaunty K.D."/>
            <person name="Miner T.L."/>
            <person name="Nash W.E."/>
            <person name="Kremitzki C."/>
            <person name="Oddy L."/>
            <person name="Du H."/>
            <person name="Sun H."/>
            <person name="Bradshaw-Cordum H."/>
            <person name="Ali J."/>
            <person name="Carter J."/>
            <person name="Cordes M."/>
            <person name="Harris A."/>
            <person name="Isak A."/>
            <person name="van Brunt A."/>
            <person name="Nguyen C."/>
            <person name="Du F."/>
            <person name="Courtney L."/>
            <person name="Kalicki J."/>
            <person name="Ozersky P."/>
            <person name="Abbott S."/>
            <person name="Armstrong J."/>
            <person name="Belter E.A."/>
            <person name="Caruso L."/>
            <person name="Cedroni M."/>
            <person name="Cotton M."/>
            <person name="Davidson T."/>
            <person name="Desai A."/>
            <person name="Elliott G."/>
            <person name="Erb T."/>
            <person name="Fronick C."/>
            <person name="Gaige T."/>
            <person name="Haakenson W."/>
            <person name="Haglund K."/>
            <person name="Holmes A."/>
            <person name="Harkins R."/>
            <person name="Kim K."/>
            <person name="Kruchowski S.S."/>
            <person name="Strong C.M."/>
            <person name="Grewal N."/>
            <person name="Goyea E."/>
            <person name="Hou S."/>
            <person name="Levy A."/>
            <person name="Martinka S."/>
            <person name="Mead K."/>
            <person name="McLellan M.D."/>
            <person name="Meyer R."/>
            <person name="Randall-Maher J."/>
            <person name="Tomlinson C."/>
            <person name="Dauphin-Kohlberg S."/>
            <person name="Kozlowicz-Reilly A."/>
            <person name="Shah N."/>
            <person name="Swearengen-Shahid S."/>
            <person name="Snider J."/>
            <person name="Strong J.T."/>
            <person name="Thompson J."/>
            <person name="Yoakum M."/>
            <person name="Leonard S."/>
            <person name="Pearman C."/>
            <person name="Trani L."/>
            <person name="Radionenko M."/>
            <person name="Waligorski J.E."/>
            <person name="Wang C."/>
            <person name="Rock S.M."/>
            <person name="Tin-Wollam A.-M."/>
            <person name="Maupin R."/>
            <person name="Latreille P."/>
            <person name="Wendl M.C."/>
            <person name="Yang S.-P."/>
            <person name="Pohl C."/>
            <person name="Wallis J.W."/>
            <person name="Spieth J."/>
            <person name="Bieri T.A."/>
            <person name="Berkowicz N."/>
            <person name="Nelson J.O."/>
            <person name="Osborne J."/>
            <person name="Ding L."/>
            <person name="Meyer R."/>
            <person name="Sabo A."/>
            <person name="Shotland Y."/>
            <person name="Sinha P."/>
            <person name="Wohldmann P.E."/>
            <person name="Cook L.L."/>
            <person name="Hickenbotham M.T."/>
            <person name="Eldred J."/>
            <person name="Williams D."/>
            <person name="Jones T.A."/>
            <person name="She X."/>
            <person name="Ciccarelli F.D."/>
            <person name="Izaurralde E."/>
            <person name="Taylor J."/>
            <person name="Schmutz J."/>
            <person name="Myers R.M."/>
            <person name="Cox D.R."/>
            <person name="Huang X."/>
            <person name="McPherson J.D."/>
            <person name="Mardis E.R."/>
            <person name="Clifton S.W."/>
            <person name="Warren W.C."/>
            <person name="Chinwalla A.T."/>
            <person name="Eddy S.R."/>
            <person name="Marra M.A."/>
            <person name="Ovcharenko I."/>
            <person name="Furey T.S."/>
            <person name="Miller W."/>
            <person name="Eichler E.E."/>
            <person name="Bork P."/>
            <person name="Suyama M."/>
            <person name="Torrents D."/>
            <person name="Waterston R.H."/>
            <person name="Wilson R.K."/>
        </authorList>
    </citation>
    <scope>NUCLEOTIDE SEQUENCE [LARGE SCALE GENOMIC DNA]</scope>
</reference>
<reference key="4">
    <citation type="submission" date="2005-09" db="EMBL/GenBank/DDBJ databases">
        <authorList>
            <person name="Mural R.J."/>
            <person name="Istrail S."/>
            <person name="Sutton G.G."/>
            <person name="Florea L."/>
            <person name="Halpern A.L."/>
            <person name="Mobarry C.M."/>
            <person name="Lippert R."/>
            <person name="Walenz B."/>
            <person name="Shatkay H."/>
            <person name="Dew I."/>
            <person name="Miller J.R."/>
            <person name="Flanigan M.J."/>
            <person name="Edwards N.J."/>
            <person name="Bolanos R."/>
            <person name="Fasulo D."/>
            <person name="Halldorsson B.V."/>
            <person name="Hannenhalli S."/>
            <person name="Turner R."/>
            <person name="Yooseph S."/>
            <person name="Lu F."/>
            <person name="Nusskern D.R."/>
            <person name="Shue B.C."/>
            <person name="Zheng X.H."/>
            <person name="Zhong F."/>
            <person name="Delcher A.L."/>
            <person name="Huson D.H."/>
            <person name="Kravitz S.A."/>
            <person name="Mouchard L."/>
            <person name="Reinert K."/>
            <person name="Remington K.A."/>
            <person name="Clark A.G."/>
            <person name="Waterman M.S."/>
            <person name="Eichler E.E."/>
            <person name="Adams M.D."/>
            <person name="Hunkapiller M.W."/>
            <person name="Myers E.W."/>
            <person name="Venter J.C."/>
        </authorList>
    </citation>
    <scope>NUCLEOTIDE SEQUENCE [LARGE SCALE GENOMIC DNA]</scope>
</reference>
<reference key="5">
    <citation type="journal article" date="2004" name="Genome Res.">
        <title>The status, quality, and expansion of the NIH full-length cDNA project: the Mammalian Gene Collection (MGC).</title>
        <authorList>
            <consortium name="The MGC Project Team"/>
        </authorList>
    </citation>
    <scope>NUCLEOTIDE SEQUENCE [LARGE SCALE MRNA] (ISOFORMS 1 AND 2)</scope>
    <source>
        <tissue>Brain</tissue>
        <tissue>Lung</tissue>
    </source>
</reference>
<reference key="6">
    <citation type="journal article" date="2013" name="J. Mol. Biol.">
        <title>PLEIAD/SIMC1/C5orf25, a novel autolysis regulator for a skeletal-muscle-specific calpain, CAPN3, scaffolds a CAPN3 substrate, CTBP1.</title>
        <authorList>
            <person name="Ono Y."/>
            <person name="Iemura S."/>
            <person name="Novak S.M."/>
            <person name="Doi N."/>
            <person name="Kitamura F."/>
            <person name="Natsume T."/>
            <person name="Gregorio C.C."/>
            <person name="Sorimachi H."/>
        </authorList>
    </citation>
    <scope>PROTEIN SEQUENCE OF 410-415</scope>
    <scope>INTERACTION WITH SIMC1</scope>
    <scope>PROTEOLYTIC CLEAVAGE SITES</scope>
    <scope>MUTAGENESIS OF ALA-52; VAL-66; GLY-183; GLY-186 AND ASP-204</scope>
</reference>
<reference key="7">
    <citation type="journal article" date="1993" name="EMBO J.">
        <title>A region in the C-terminus of adenovirus 2/5 E1a protein is required for association with a cellular phosphoprotein and important for the negative modulation of T24-ras mediated transformation, tumorigenesis and metastasis.</title>
        <authorList>
            <person name="Boyd J.M."/>
            <person name="Subramanian T."/>
            <person name="Schaeper U."/>
            <person name="la Regina M."/>
            <person name="Bayley S."/>
            <person name="Chinnadurai G."/>
        </authorList>
    </citation>
    <scope>INTERACTION WITH ADENOVIRUS E1A (MICROBIAL INFECTION)</scope>
    <scope>PHOSPHORYLATION</scope>
</reference>
<reference key="8">
    <citation type="journal article" date="2001" name="J. Biol. Chem.">
        <title>Interaction of EVI1 with cAMP-responsive element-binding protein-binding protein (CBP) and p300/CBP-associated factor (P/CAF) results in reversible acetylation of EVI1 and in co-localization in nuclear speckles.</title>
        <authorList>
            <person name="Chakraborty S."/>
            <person name="Senyuk V."/>
            <person name="Sitailo S."/>
            <person name="Chi Y."/>
            <person name="Nucifora G."/>
        </authorList>
    </citation>
    <scope>INTERACTION WITH MECOM</scope>
</reference>
<reference key="9">
    <citation type="journal article" date="2001" name="J. Virol.">
        <title>Physical and functional interactions between the corepressor CtBP and the Epstein-Barr virus nuclear antigen EBNA3C.</title>
        <authorList>
            <person name="Touitou R."/>
            <person name="Hickabottom M."/>
            <person name="Parker G."/>
            <person name="Crook T."/>
            <person name="Allday M.J."/>
        </authorList>
    </citation>
    <scope>INTERACTION WITH EPSTEIN-BARR VIRUS/EBV PROTEIN EBNA6 (MICROBIAL INFECTION)</scope>
</reference>
<reference key="10">
    <citation type="journal article" date="2001" name="Mol. Cell. Biol.">
        <title>Acetylation of nuclear hormone receptor-interacting protein RIP140 regulates binding of the transcriptional corepressor CtBP.</title>
        <authorList>
            <person name="Vo N."/>
            <person name="Fjeld C."/>
            <person name="Goodman R.H."/>
        </authorList>
    </citation>
    <scope>INTERACTION WITH NRIP1</scope>
</reference>
<reference key="11">
    <citation type="journal article" date="2002" name="J. Biol. Chem.">
        <title>Two nonconsensus sites in the Epstein-Barr virus oncoprotein EBNA3A cooperate to bind the co-repressor carboxyl-terminal-binding protein (CtBP).</title>
        <authorList>
            <person name="Hickabottom M."/>
            <person name="Parker G.A."/>
            <person name="Freemont P."/>
            <person name="Crook T."/>
            <person name="Allday M.J."/>
        </authorList>
    </citation>
    <scope>INTERACTION WITH EPSTEIN-BARR VIRUS/EBV PROTEIN EBNA3 (MICROBIAL INFECTION)</scope>
</reference>
<reference key="12">
    <citation type="journal article" date="2003" name="Cell">
        <title>The polycomb protein Pc2 is a SUMO E3.</title>
        <authorList>
            <person name="Kagey M.H."/>
            <person name="Melhuish T.A."/>
            <person name="Wotton D."/>
        </authorList>
    </citation>
    <scope>SUMOYLATION AT LYS-428</scope>
    <scope>SUBCELLULAR LOCATION</scope>
</reference>
<reference key="13">
    <citation type="journal article" date="2003" name="Cell">
        <title>Homeodomain interacting protein kinase 2 promotes apoptosis by downregulating the transcriptional corepressor CtBP.</title>
        <authorList>
            <person name="Zhang Q."/>
            <person name="Yoshimatsu Y."/>
            <person name="Hildebrand J."/>
            <person name="Frisch S.M."/>
            <person name="Goodman R.H."/>
        </authorList>
    </citation>
    <scope>INTERACTION WITH HIPK2</scope>
    <scope>PHOSPHORYLATION AT SER-422</scope>
    <scope>MUTAGENESIS OF SER-422</scope>
</reference>
<reference key="14">
    <citation type="journal article" date="2004" name="Mol. Cell. Biol.">
        <title>Nuclear speckle-associated protein Pnn/DRS binds to the transcriptional corepressor CtBP and relieves CtBP-mediated repression of the E-cadherin gene.</title>
        <authorList>
            <person name="Alpatov R."/>
            <person name="Munguba G.C."/>
            <person name="Caton P."/>
            <person name="Joo J.H."/>
            <person name="Shi Y."/>
            <person name="Shi Y."/>
            <person name="Hunt M.E."/>
            <person name="Sugrue S.P."/>
        </authorList>
    </citation>
    <scope>FUNCTION IN TRANSCRIPTIONAL REPRESSION</scope>
    <scope>INTERACTION WITH PNN</scope>
</reference>
<reference key="15">
    <citation type="journal article" date="2004" name="Nucleic Acids Res.">
        <title>Multiple domains of the receptor-interacting protein 140 contribute to transcription inhibition.</title>
        <authorList>
            <person name="Castet A."/>
            <person name="Boulahtouf A."/>
            <person name="Versini G."/>
            <person name="Bonnet S."/>
            <person name="Augereau P."/>
            <person name="Vignon F."/>
            <person name="Khochbin S."/>
            <person name="Jalaguier S."/>
            <person name="Cavailles V."/>
        </authorList>
    </citation>
    <scope>INTERACTION WITH NRIP1</scope>
</reference>
<reference key="16">
    <citation type="journal article" date="2005" name="J. Biol. Chem.">
        <title>Pc2-mediated sumoylation of Smad-interacting protein 1 attenuates transcriptional repression of E-cadherin.</title>
        <authorList>
            <person name="Long J."/>
            <person name="Zuo D."/>
            <person name="Park M."/>
        </authorList>
    </citation>
    <scope>INTERACTION WITH ZFHX1B</scope>
</reference>
<reference key="17">
    <citation type="journal article" date="2005" name="Oncogene">
        <title>Oligomerization of Evi-1 regulated by the PR domain contributes to recruitment of corepressor CtBP.</title>
        <authorList>
            <person name="Nitta E."/>
            <person name="Izutsu K."/>
            <person name="Yamaguchi Y."/>
            <person name="Imai Y."/>
            <person name="Ogawa S."/>
            <person name="Chiba S."/>
            <person name="Kurokawa M."/>
            <person name="Hirai H."/>
        </authorList>
    </citation>
    <scope>INTERACTION WITH MECOM</scope>
</reference>
<reference key="18">
    <citation type="journal article" date="2006" name="Dev. Genes Evol.">
        <title>The FoxP subclass in Xenopus laevis development.</title>
        <authorList>
            <person name="Schoen C."/>
            <person name="Wochnik A."/>
            <person name="Roessner A."/>
            <person name="Donow C."/>
            <person name="Knoechel W."/>
        </authorList>
    </citation>
    <scope>INTERACTION WITH FOXP1</scope>
</reference>
<reference key="19">
    <citation type="journal article" date="2006" name="J. Biol. Chem.">
        <title>Zinc finger protein Wiz links G9a/GLP histone methyltransferases to the co-repressor molecule CtBP.</title>
        <authorList>
            <person name="Ueda J."/>
            <person name="Tachibana M."/>
            <person name="Ikura T."/>
            <person name="Shinkai Y."/>
        </authorList>
    </citation>
    <scope>INTERACTION WITH WIZ</scope>
</reference>
<reference key="20">
    <citation type="journal article" date="2006" name="J. Immunol.">
        <title>Identification and characterization of DC-SCRIPT, a novel dendritic cell-expressed member of the zinc finger family of transcriptional regulators.</title>
        <authorList>
            <person name="Triantis V."/>
            <person name="Trancikova D.E."/>
            <person name="Looman M.W."/>
            <person name="Hartgers F.C."/>
            <person name="Janssen R.A."/>
            <person name="Adema G.J."/>
        </authorList>
    </citation>
    <scope>INTERACTION WITH ZNF366</scope>
</reference>
<reference key="21">
    <citation type="journal article" date="2006" name="Nucleic Acids Res.">
        <title>ZNF366 is an estrogen receptor corepressor that acts through CtBP and histone deacetylases.</title>
        <authorList>
            <person name="Lopez-Garcia J."/>
            <person name="Periyasamy M."/>
            <person name="Thomas R.S."/>
            <person name="Christian M."/>
            <person name="Leao M."/>
            <person name="Jat P."/>
            <person name="Kindle K.B."/>
            <person name="Heery D.M."/>
            <person name="Parker M.G."/>
            <person name="Buluwela L."/>
            <person name="Kamalati T."/>
            <person name="Ali S."/>
        </authorList>
    </citation>
    <scope>INTERACTION WITH ZNF366</scope>
</reference>
<reference key="22">
    <citation type="journal article" date="2007" name="Science">
        <title>ATM and ATR substrate analysis reveals extensive protein networks responsive to DNA damage.</title>
        <authorList>
            <person name="Matsuoka S."/>
            <person name="Ballif B.A."/>
            <person name="Smogorzewska A."/>
            <person name="McDonald E.R. III"/>
            <person name="Hurov K.E."/>
            <person name="Luo J."/>
            <person name="Bakalarski C.E."/>
            <person name="Zhao Z."/>
            <person name="Solimini N."/>
            <person name="Lerenthal Y."/>
            <person name="Shiloh Y."/>
            <person name="Gygi S.P."/>
            <person name="Elledge S.J."/>
        </authorList>
    </citation>
    <scope>PHOSPHORYLATION [LARGE SCALE ANALYSIS] AT SER-300</scope>
    <scope>IDENTIFICATION BY MASS SPECTROMETRY [LARGE SCALE ANALYSIS]</scope>
    <source>
        <tissue>Embryonic kidney</tissue>
    </source>
</reference>
<reference key="23">
    <citation type="journal article" date="2008" name="Mol. Cell. Biol.">
        <title>CtBP is an essential corepressor for BCL6 autoregulation.</title>
        <authorList>
            <person name="Mendez L.M."/>
            <person name="Polo J.M."/>
            <person name="Yu J.J."/>
            <person name="Krupski M."/>
            <person name="Ding B.B."/>
            <person name="Melnick A."/>
            <person name="Ye B.H."/>
        </authorList>
    </citation>
    <scope>FUNCTION AS COREPRESSOR</scope>
    <scope>INTERACTION WITH BCL6</scope>
    <scope>TISSUE SPECIFICITY</scope>
</reference>
<reference key="24">
    <citation type="journal article" date="2009" name="Mol. Cell. Biol.">
        <title>Acetylation-dependent interaction of SATB1 and CtBP1 mediates transcriptional repression by SATB1.</title>
        <authorList>
            <person name="Purbey P.K."/>
            <person name="Singh S."/>
            <person name="Notani D."/>
            <person name="Kumar P.P."/>
            <person name="Limaye A.S."/>
            <person name="Galande S."/>
        </authorList>
    </citation>
    <scope>FUNCTION</scope>
    <scope>INTERACTION WITH SATB1</scope>
</reference>
<reference key="25">
    <citation type="journal article" date="2011" name="BMC Syst. Biol.">
        <title>Initial characterization of the human central proteome.</title>
        <authorList>
            <person name="Burkard T.R."/>
            <person name="Planyavsky M."/>
            <person name="Kaupe I."/>
            <person name="Breitwieser F.P."/>
            <person name="Buerckstuemmer T."/>
            <person name="Bennett K.L."/>
            <person name="Superti-Furga G."/>
            <person name="Colinge J."/>
        </authorList>
    </citation>
    <scope>IDENTIFICATION BY MASS SPECTROMETRY [LARGE SCALE ANALYSIS]</scope>
</reference>
<reference key="26">
    <citation type="journal article" date="2013" name="J. Proteome Res.">
        <title>Toward a comprehensive characterization of a human cancer cell phosphoproteome.</title>
        <authorList>
            <person name="Zhou H."/>
            <person name="Di Palma S."/>
            <person name="Preisinger C."/>
            <person name="Peng M."/>
            <person name="Polat A.N."/>
            <person name="Heck A.J."/>
            <person name="Mohammed S."/>
        </authorList>
    </citation>
    <scope>PHOSPHORYLATION [LARGE SCALE ANALYSIS] AT SER-300</scope>
    <scope>IDENTIFICATION BY MASS SPECTROMETRY [LARGE SCALE ANALYSIS]</scope>
    <source>
        <tissue>Erythroleukemia</tissue>
    </source>
</reference>
<reference key="27">
    <citation type="journal article" date="2013" name="Virology">
        <title>Interaction of CtBP with adenovirus E1A suppresses immortalization of primary epithelial cells and enhances virus replication during productive infection.</title>
        <authorList>
            <person name="Subramanian T."/>
            <person name="Zhao L.J."/>
            <person name="Chinnadurai G."/>
        </authorList>
    </citation>
    <scope>INTERACTION WITH HADV5 E1A (MICROBIAL INFECTION)</scope>
</reference>
<reference key="28">
    <citation type="journal article" date="2014" name="J. Proteomics">
        <title>An enzyme assisted RP-RPLC approach for in-depth analysis of human liver phosphoproteome.</title>
        <authorList>
            <person name="Bian Y."/>
            <person name="Song C."/>
            <person name="Cheng K."/>
            <person name="Dong M."/>
            <person name="Wang F."/>
            <person name="Huang J."/>
            <person name="Sun D."/>
            <person name="Wang L."/>
            <person name="Ye M."/>
            <person name="Zou H."/>
        </authorList>
    </citation>
    <scope>IDENTIFICATION BY MASS SPECTROMETRY [LARGE SCALE ANALYSIS]</scope>
    <source>
        <tissue>Liver</tissue>
    </source>
</reference>
<reference key="29">
    <citation type="journal article" date="2015" name="Mol. Cell">
        <title>MCRIP1, an ERK substrate, mediates ERK-induced gene silencing during epithelial-mesenchymal transition by regulating the co-repressor CtBP.</title>
        <authorList>
            <person name="Ichikawa K."/>
            <person name="Kubota Y."/>
            <person name="Nakamura T."/>
            <person name="Weng J.S."/>
            <person name="Tomida T."/>
            <person name="Saito H."/>
            <person name="Takekawa M."/>
        </authorList>
    </citation>
    <scope>INTERACTION WITH MCRIP1</scope>
</reference>
<reference key="30">
    <citation type="journal article" date="2016" name="Neurogenetics">
        <title>A recurrent de novo CTBP1 mutation is associated with developmental delay, hypotonia, ataxia, and tooth enamel defects.</title>
        <authorList>
            <person name="Beck D.B."/>
            <person name="Cho M.T."/>
            <person name="Millan F."/>
            <person name="Yates C."/>
            <person name="Hannibal M."/>
            <person name="O'Connor B."/>
            <person name="Shinawi M."/>
            <person name="Connolly A.M."/>
            <person name="Waggoner D."/>
            <person name="Halbach S."/>
            <person name="Angle B."/>
            <person name="Sanders V."/>
            <person name="Shen Y."/>
            <person name="Retterer K."/>
            <person name="Begtrup A."/>
            <person name="Bai R."/>
            <person name="Chung W.K."/>
        </authorList>
    </citation>
    <scope>INVOLVEMENT IN HADDTS</scope>
    <scope>VARIANT HADDTS TRP-342</scope>
</reference>
<reference key="31">
    <citation type="journal article" date="2002" name="Mol. Cell">
        <title>Transcription corepressor CtBP is an NAD(+)-regulated dehydrogenase.</title>
        <authorList>
            <person name="Kumar V."/>
            <person name="Carlson J.E."/>
            <person name="Ohgi K.A."/>
            <person name="Edwards T.A."/>
            <person name="Rose D.W."/>
            <person name="Escalante C.R."/>
            <person name="Rosenfeld M.G."/>
            <person name="Aggarwal A.K."/>
        </authorList>
    </citation>
    <scope>X-RAY CRYSTALLOGRAPHY (1.95 ANGSTROMS) OF 28-353 IN COMPLEX WITH NAD</scope>
    <scope>FUNCTION</scope>
    <scope>COFACTOR</scope>
    <scope>MUTAGENESIS OF CYS-134; ASN-138; ARG-141; 141-ARG-ARG-142; LEU-150; ARG-163; ARG-171; GLY-181; GLY-183; ASP-204; ARG-266; ASP-290; GLU-295 AND HIS-315</scope>
    <scope>DIMERIZATION</scope>
</reference>
<evidence type="ECO:0000250" key="1"/>
<evidence type="ECO:0000250" key="2">
    <source>
        <dbReference type="UniProtKB" id="O88712"/>
    </source>
</evidence>
<evidence type="ECO:0000256" key="3">
    <source>
        <dbReference type="SAM" id="MobiDB-lite"/>
    </source>
</evidence>
<evidence type="ECO:0000269" key="4">
    <source>
    </source>
</evidence>
<evidence type="ECO:0000269" key="5">
    <source>
    </source>
</evidence>
<evidence type="ECO:0000269" key="6">
    <source>
    </source>
</evidence>
<evidence type="ECO:0000269" key="7">
    <source>
    </source>
</evidence>
<evidence type="ECO:0000269" key="8">
    <source>
    </source>
</evidence>
<evidence type="ECO:0000269" key="9">
    <source>
    </source>
</evidence>
<evidence type="ECO:0000269" key="10">
    <source>
    </source>
</evidence>
<evidence type="ECO:0000269" key="11">
    <source>
    </source>
</evidence>
<evidence type="ECO:0000269" key="12">
    <source>
    </source>
</evidence>
<evidence type="ECO:0000269" key="13">
    <source>
    </source>
</evidence>
<evidence type="ECO:0000269" key="14">
    <source>
    </source>
</evidence>
<evidence type="ECO:0000269" key="15">
    <source>
    </source>
</evidence>
<evidence type="ECO:0000269" key="16">
    <source>
    </source>
</evidence>
<evidence type="ECO:0000269" key="17">
    <source>
    </source>
</evidence>
<evidence type="ECO:0000269" key="18">
    <source>
    </source>
</evidence>
<evidence type="ECO:0000269" key="19">
    <source>
    </source>
</evidence>
<evidence type="ECO:0000269" key="20">
    <source>
    </source>
</evidence>
<evidence type="ECO:0000269" key="21">
    <source>
    </source>
</evidence>
<evidence type="ECO:0000269" key="22">
    <source>
    </source>
</evidence>
<evidence type="ECO:0000269" key="23">
    <source>
    </source>
</evidence>
<evidence type="ECO:0000269" key="24">
    <source>
    </source>
</evidence>
<evidence type="ECO:0000269" key="25">
    <source>
    </source>
</evidence>
<evidence type="ECO:0000269" key="26">
    <source>
    </source>
</evidence>
<evidence type="ECO:0000269" key="27">
    <source>
    </source>
</evidence>
<evidence type="ECO:0000303" key="28">
    <source>
    </source>
</evidence>
<evidence type="ECO:0000305" key="29"/>
<evidence type="ECO:0007744" key="30">
    <source>
    </source>
</evidence>
<evidence type="ECO:0007744" key="31">
    <source>
    </source>
</evidence>
<evidence type="ECO:0007829" key="32">
    <source>
        <dbReference type="PDB" id="1MX3"/>
    </source>
</evidence>
<evidence type="ECO:0007829" key="33">
    <source>
        <dbReference type="PDB" id="4U6S"/>
    </source>
</evidence>
<evidence type="ECO:0007829" key="34">
    <source>
        <dbReference type="PDB" id="7KWM"/>
    </source>
</evidence>
<name>CTBP1_HUMAN</name>
<accession>Q13363</accession>
<accession>Q4W5N3</accession>
<accession>Q7Z2Q5</accession>
<feature type="chain" id="PRO_0000076041" description="C-terminal-binding protein 1">
    <location>
        <begin position="1"/>
        <end position="440"/>
    </location>
</feature>
<feature type="region of interest" description="Interaction with GLIS2 1" evidence="1">
    <location>
        <begin position="1"/>
        <end position="70"/>
    </location>
</feature>
<feature type="region of interest" description="Interaction with GLIS2 2" evidence="1">
    <location>
        <begin position="288"/>
        <end position="360"/>
    </location>
</feature>
<feature type="region of interest" description="Disordered" evidence="3">
    <location>
        <begin position="408"/>
        <end position="440"/>
    </location>
</feature>
<feature type="compositionally biased region" description="Basic and acidic residues" evidence="3">
    <location>
        <begin position="429"/>
        <end position="440"/>
    </location>
</feature>
<feature type="active site" evidence="1">
    <location>
        <position position="266"/>
    </location>
</feature>
<feature type="active site" evidence="1">
    <location>
        <position position="295"/>
    </location>
</feature>
<feature type="active site" description="Proton donor" evidence="1">
    <location>
        <position position="315"/>
    </location>
</feature>
<feature type="binding site" evidence="1">
    <location>
        <position position="100"/>
    </location>
    <ligand>
        <name>NAD(+)</name>
        <dbReference type="ChEBI" id="CHEBI:57540"/>
    </ligand>
</feature>
<feature type="binding site" evidence="1">
    <location>
        <begin position="180"/>
        <end position="185"/>
    </location>
    <ligand>
        <name>NAD(+)</name>
        <dbReference type="ChEBI" id="CHEBI:57540"/>
    </ligand>
</feature>
<feature type="binding site" evidence="1">
    <location>
        <position position="204"/>
    </location>
    <ligand>
        <name>NAD(+)</name>
        <dbReference type="ChEBI" id="CHEBI:57540"/>
    </ligand>
</feature>
<feature type="binding site" evidence="1">
    <location>
        <begin position="237"/>
        <end position="243"/>
    </location>
    <ligand>
        <name>NAD(+)</name>
        <dbReference type="ChEBI" id="CHEBI:57540"/>
    </ligand>
</feature>
<feature type="binding site" evidence="1">
    <location>
        <begin position="264"/>
        <end position="266"/>
    </location>
    <ligand>
        <name>NAD(+)</name>
        <dbReference type="ChEBI" id="CHEBI:57540"/>
    </ligand>
</feature>
<feature type="binding site" evidence="1">
    <location>
        <position position="290"/>
    </location>
    <ligand>
        <name>NAD(+)</name>
        <dbReference type="ChEBI" id="CHEBI:57540"/>
    </ligand>
</feature>
<feature type="binding site" evidence="1">
    <location>
        <begin position="315"/>
        <end position="318"/>
    </location>
    <ligand>
        <name>NAD(+)</name>
        <dbReference type="ChEBI" id="CHEBI:57540"/>
    </ligand>
</feature>
<feature type="site" description="Cleavage; by CAPN1" evidence="21">
    <location>
        <begin position="375"/>
        <end position="376"/>
    </location>
</feature>
<feature type="site" description="Cleavage; by CAPN1" evidence="21">
    <location>
        <begin position="387"/>
        <end position="388"/>
    </location>
</feature>
<feature type="site" description="Cleavage; by CAPN1 and CAPN3" evidence="21">
    <location>
        <begin position="409"/>
        <end position="410"/>
    </location>
</feature>
<feature type="modified residue" description="Phosphoserine" evidence="30 31">
    <location>
        <position position="300"/>
    </location>
</feature>
<feature type="modified residue" description="Phosphoserine; by HIPK2" evidence="10">
    <location>
        <position position="422"/>
    </location>
</feature>
<feature type="cross-link" description="Glycyl lysine isopeptide (Lys-Gly) (interchain with G-Cter in SUMO)" evidence="9">
    <location>
        <position position="428"/>
    </location>
</feature>
<feature type="splice variant" id="VSP_043305" description="In isoform 2." evidence="28">
    <original>MGSSHLLNKGLPL</original>
    <variation>MS</variation>
    <location>
        <begin position="1"/>
        <end position="13"/>
    </location>
</feature>
<feature type="sequence variant" id="VAR_080622" description="In HADDTS; dbSNP:rs869320802." evidence="24">
    <original>R</original>
    <variation>W</variation>
    <location>
        <position position="342"/>
    </location>
</feature>
<feature type="mutagenesis site" description="Loss of interaction with SIMC1. No effect on its proteolytic processing mediated by CAPN3." evidence="21">
    <original>A</original>
    <variation>E</variation>
    <location>
        <position position="52"/>
    </location>
</feature>
<feature type="mutagenesis site" description="Loss of interaction with SIMC1. Reduced proteolytic processing mediated by CAPN3." evidence="21">
    <original>V</original>
    <variation>R</variation>
    <location>
        <position position="66"/>
    </location>
</feature>
<feature type="mutagenesis site" description="Strongly reduces E1A binding; when associated with A-138; A-141 and A-150." evidence="8">
    <original>C</original>
    <variation>A</variation>
    <location>
        <position position="134"/>
    </location>
</feature>
<feature type="mutagenesis site" description="Strongly reduces E1A binding; when associated with A-134; A-141 and A-150." evidence="8">
    <original>N</original>
    <variation>A</variation>
    <location>
        <position position="138"/>
    </location>
</feature>
<feature type="mutagenesis site" description="Strongly reduces E1A binding; when associated with A-163 and A-171." evidence="8">
    <original>RR</original>
    <variation>AA</variation>
    <location>
        <begin position="141"/>
        <end position="142"/>
    </location>
</feature>
<feature type="mutagenesis site" description="Strongly reduces E1A binding; when associated with A-134; A-138 and A-150." evidence="8">
    <original>R</original>
    <variation>A</variation>
    <location>
        <position position="141"/>
    </location>
</feature>
<feature type="mutagenesis site" description="Strongly reduces E1A binding; when associated with A-134; A-138 and A-141." evidence="8">
    <original>L</original>
    <variation>A</variation>
    <location>
        <position position="150"/>
    </location>
</feature>
<feature type="mutagenesis site" description="Strongly reduces E1A binding; when associated with A-141; A-142 and A-171." evidence="8">
    <original>R</original>
    <variation>A</variation>
    <location>
        <position position="163"/>
    </location>
</feature>
<feature type="mutagenesis site" description="Strongly reduces E1A binding; when associated with A-141; A-142 and A-163." evidence="8">
    <original>R</original>
    <variation>A</variation>
    <location>
        <position position="171"/>
    </location>
</feature>
<feature type="mutagenesis site" description="Strongly reduces E1A binding; when associated with V-183 and A-204." evidence="8">
    <original>G</original>
    <variation>V</variation>
    <location>
        <position position="181"/>
    </location>
</feature>
<feature type="mutagenesis site" description="Reduced proteolytic processing mediated by CAPN3; when associated with A-186." evidence="21">
    <original>G</original>
    <variation>A</variation>
    <location>
        <position position="183"/>
    </location>
</feature>
<feature type="mutagenesis site" description="Strongly reduces E1A binding; when associated with V-181 and A-204." evidence="8">
    <original>G</original>
    <variation>V</variation>
    <location>
        <position position="183"/>
    </location>
</feature>
<feature type="mutagenesis site" description="Reduced proteolytic processing mediated by CAPN3; when associated with A-183." evidence="21">
    <original>G</original>
    <variation>A</variation>
    <location>
        <position position="186"/>
    </location>
</feature>
<feature type="mutagenesis site" description="Strongly reduces E1A binding; when associated with V-181 and V-183." evidence="8">
    <original>D</original>
    <variation>A</variation>
    <location>
        <position position="204"/>
    </location>
</feature>
<feature type="mutagenesis site" description="Reduced proteolytic processing mediated by CAPN3." evidence="21">
    <original>D</original>
    <variation>L</variation>
    <location>
        <position position="204"/>
    </location>
</feature>
<feature type="mutagenesis site" description="Strongly reduces E1A binding; when associated with A-290; A-295 and A-315." evidence="8">
    <original>R</original>
    <variation>A</variation>
    <location>
        <position position="266"/>
    </location>
</feature>
<feature type="mutagenesis site" description="Strongly reduces E1A binding; when associated with A-266; A-295 and A-315." evidence="8">
    <original>D</original>
    <variation>A</variation>
    <location>
        <position position="290"/>
    </location>
</feature>
<feature type="mutagenesis site" description="Strongly reduces E1A binding; when associated with A-266; A-290 and A-315." evidence="8">
    <original>E</original>
    <variation>A</variation>
    <location>
        <position position="295"/>
    </location>
</feature>
<feature type="mutagenesis site" description="Strongly reduces E1A binding; when associated with A-266; A-290 and A-295." evidence="8">
    <original>H</original>
    <variation>A</variation>
    <location>
        <position position="315"/>
    </location>
</feature>
<feature type="mutagenesis site" description="Abolishes phosphorylation by HIPK2 and prevents UV-induced clearance." evidence="10">
    <original>S</original>
    <variation>A</variation>
    <location>
        <position position="422"/>
    </location>
</feature>
<feature type="strand" evidence="32">
    <location>
        <begin position="29"/>
        <end position="34"/>
    </location>
</feature>
<feature type="turn" evidence="32">
    <location>
        <begin position="39"/>
        <end position="41"/>
    </location>
</feature>
<feature type="helix" evidence="32">
    <location>
        <begin position="42"/>
        <end position="45"/>
    </location>
</feature>
<feature type="turn" evidence="32">
    <location>
        <begin position="46"/>
        <end position="48"/>
    </location>
</feature>
<feature type="strand" evidence="32">
    <location>
        <begin position="50"/>
        <end position="53"/>
    </location>
</feature>
<feature type="helix" evidence="32">
    <location>
        <begin position="59"/>
        <end position="61"/>
    </location>
</feature>
<feature type="helix" evidence="32">
    <location>
        <begin position="64"/>
        <end position="69"/>
    </location>
</feature>
<feature type="strand" evidence="32">
    <location>
        <begin position="70"/>
        <end position="75"/>
    </location>
</feature>
<feature type="strand" evidence="32">
    <location>
        <begin position="77"/>
        <end position="79"/>
    </location>
</feature>
<feature type="helix" evidence="32">
    <location>
        <begin position="83"/>
        <end position="86"/>
    </location>
</feature>
<feature type="strand" evidence="32">
    <location>
        <begin position="94"/>
        <end position="100"/>
    </location>
</feature>
<feature type="helix" evidence="32">
    <location>
        <begin position="107"/>
        <end position="112"/>
    </location>
</feature>
<feature type="strand" evidence="32">
    <location>
        <begin position="116"/>
        <end position="118"/>
    </location>
</feature>
<feature type="turn" evidence="33">
    <location>
        <begin position="121"/>
        <end position="124"/>
    </location>
</feature>
<feature type="helix" evidence="32">
    <location>
        <begin position="125"/>
        <end position="141"/>
    </location>
</feature>
<feature type="helix" evidence="32">
    <location>
        <begin position="143"/>
        <end position="151"/>
    </location>
</feature>
<feature type="helix" evidence="32">
    <location>
        <begin position="159"/>
        <end position="165"/>
    </location>
</feature>
<feature type="turn" evidence="32">
    <location>
        <begin position="166"/>
        <end position="168"/>
    </location>
</feature>
<feature type="strand" evidence="32">
    <location>
        <begin position="176"/>
        <end position="180"/>
    </location>
</feature>
<feature type="helix" evidence="32">
    <location>
        <begin position="184"/>
        <end position="194"/>
    </location>
</feature>
<feature type="turn" evidence="32">
    <location>
        <begin position="195"/>
        <end position="197"/>
    </location>
</feature>
<feature type="strand" evidence="32">
    <location>
        <begin position="199"/>
        <end position="203"/>
    </location>
</feature>
<feature type="helix" evidence="32">
    <location>
        <begin position="211"/>
        <end position="215"/>
    </location>
</feature>
<feature type="helix" evidence="32">
    <location>
        <begin position="223"/>
        <end position="229"/>
    </location>
</feature>
<feature type="strand" evidence="32">
    <location>
        <begin position="231"/>
        <end position="235"/>
    </location>
</feature>
<feature type="strand" evidence="32">
    <location>
        <begin position="246"/>
        <end position="248"/>
    </location>
</feature>
<feature type="helix" evidence="32">
    <location>
        <begin position="249"/>
        <end position="252"/>
    </location>
</feature>
<feature type="strand" evidence="32">
    <location>
        <begin position="259"/>
        <end position="263"/>
    </location>
</feature>
<feature type="helix" evidence="33">
    <location>
        <begin position="267"/>
        <end position="269"/>
    </location>
</feature>
<feature type="helix" evidence="32">
    <location>
        <begin position="272"/>
        <end position="280"/>
    </location>
</feature>
<feature type="strand" evidence="32">
    <location>
        <begin position="283"/>
        <end position="290"/>
    </location>
</feature>
<feature type="strand" evidence="32">
    <location>
        <begin position="293"/>
        <end position="296"/>
    </location>
</feature>
<feature type="turn" evidence="32">
    <location>
        <begin position="303"/>
        <end position="306"/>
    </location>
</feature>
<feature type="strand" evidence="32">
    <location>
        <begin position="308"/>
        <end position="312"/>
    </location>
</feature>
<feature type="helix" evidence="32">
    <location>
        <begin position="321"/>
        <end position="340"/>
    </location>
</feature>
<feature type="turn" evidence="32">
    <location>
        <begin position="343"/>
        <end position="346"/>
    </location>
</feature>
<feature type="strand" evidence="32">
    <location>
        <begin position="348"/>
        <end position="350"/>
    </location>
</feature>
<feature type="turn" evidence="34">
    <location>
        <begin position="353"/>
        <end position="355"/>
    </location>
</feature>
<protein>
    <recommendedName>
        <fullName>C-terminal-binding protein 1</fullName>
        <shortName>CtBP1</shortName>
        <ecNumber>1.1.1.-</ecNumber>
    </recommendedName>
</protein>
<keyword id="KW-0002">3D-structure</keyword>
<keyword id="KW-0013">ADP-ribosylation</keyword>
<keyword id="KW-0025">Alternative splicing</keyword>
<keyword id="KW-0963">Cytoplasm</keyword>
<keyword id="KW-0221">Differentiation</keyword>
<keyword id="KW-0903">Direct protein sequencing</keyword>
<keyword id="KW-0225">Disease variant</keyword>
<keyword id="KW-0945">Host-virus interaction</keyword>
<keyword id="KW-0991">Intellectual disability</keyword>
<keyword id="KW-1017">Isopeptide bond</keyword>
<keyword id="KW-0520">NAD</keyword>
<keyword id="KW-0539">Nucleus</keyword>
<keyword id="KW-0560">Oxidoreductase</keyword>
<keyword id="KW-0597">Phosphoprotein</keyword>
<keyword id="KW-1267">Proteomics identification</keyword>
<keyword id="KW-1185">Reference proteome</keyword>
<keyword id="KW-0678">Repressor</keyword>
<keyword id="KW-0804">Transcription</keyword>
<keyword id="KW-0805">Transcription regulation</keyword>
<keyword id="KW-0832">Ubl conjugation</keyword>
<comment type="function">
    <text evidence="8 12 19 20 27">Corepressor targeting diverse transcription regulators such as GLIS2 or BCL6. Has dehydrogenase activity. Involved in controlling the equilibrium between tubular and stacked structures in the Golgi complex. Functions in brown adipose tissue (BAT) differentiation.</text>
</comment>
<comment type="cofactor">
    <cofactor evidence="8">
        <name>NAD(+)</name>
        <dbReference type="ChEBI" id="CHEBI:57540"/>
    </cofactor>
    <text evidence="8">NAD is required for efficient interaction with E1A. Cofactor binding induces a conformation change.</text>
</comment>
<comment type="subunit">
    <text evidence="2 5 6 8 10 11 12 13 14 15 16 17 18 19 20 21 23 25">Homo- or heterodimer. Heterodimer with CTBP2. Interacts with PRDM16; the interaction represses white adipose tissue (WAT)-specific genes expression. Interacts with GLIS2, FOXP2, HDAC4, HDAC5, HDAC9 and ZNF217. Interacts with ELK3 (via its PXDLS motif). Interacts with RBBP8 (via its PXDLS motif); the interaction is disrupted by binding to adenovirus E1A. Interacts with FOXP1, HIPK2, PNN, NRIP1, MECOM, ZFHX1B and WIZ. Interacts with ZNF366 (via PXDLS motif) (PubMed:16393996, PubMed:17085477). Interaction with SATB1 (non-acetylated form); the interaction stabilizes its attachment to DNA and promotes transcription repression. Interacts with BCL6; the interaction is required for BCL6 transcriptional autoinhibition and inhibition of some BCL6 target genes. Interacts with IKZF4 (By similarity). Interacts with MCRIP1 (unphosphorylated form, via the PXDLS motif); competitively inhibiting CTBP-ZEB1 interaction (PubMed:25728771). Interacts with Bassoon/BSN; this interaction targets and anchors CTBP1 to presynapses (By similarity). Interacts with SIMC1 (PubMed:23707407).</text>
</comment>
<comment type="subunit">
    <text evidence="4 7">(Microbial infection) Interacts with Epstein-Barr virus EBNA3 (PubMed:12372828). Interacts with Epstein-Barr virus EBNA6; this interaction leads to gene repression, but also seems to interfere with the repressive function of CtBP pre-bound to DNA, leading to EBNA6 mediated up-regulation of many cellular genes (PubMed:11462050).</text>
</comment>
<comment type="subunit">
    <text evidence="26">(Microbial infection) Interacts with adenovirus E1A protein (via its C-terminus); the interaction disrupts the interaction of CTBP1 with RBBP8.</text>
</comment>
<comment type="subunit">
    <text evidence="22">(Microbial infection) Interacts with human adenovirus 5 E1A protein; this interaction seems to potentiate viral replication.</text>
</comment>
<comment type="interaction">
    <interactant intactId="EBI-908846">
        <id>Q13363</id>
    </interactant>
    <interactant intactId="EBI-722425">
        <id>O00257</id>
        <label>CBX4</label>
    </interactant>
    <organismsDiffer>false</organismsDiffer>
    <experiments>5</experiments>
</comment>
<comment type="interaction">
    <interactant intactId="EBI-908846">
        <id>Q13363</id>
    </interactant>
    <interactant intactId="EBI-908846">
        <id>Q13363</id>
        <label>CTBP1</label>
    </interactant>
    <organismsDiffer>false</organismsDiffer>
    <experiments>8</experiments>
</comment>
<comment type="interaction">
    <interactant intactId="EBI-908846">
        <id>Q13363</id>
    </interactant>
    <interactant intactId="EBI-741533">
        <id>P56545</id>
        <label>CTBP2</label>
    </interactant>
    <organismsDiffer>false</organismsDiffer>
    <experiments>17</experiments>
</comment>
<comment type="interaction">
    <interactant intactId="EBI-908846">
        <id>Q13363</id>
    </interactant>
    <interactant intactId="EBI-3916399">
        <id>Q9BXL5</id>
        <label>HEMGN</label>
    </interactant>
    <organismsDiffer>false</organismsDiffer>
    <experiments>2</experiments>
</comment>
<comment type="interaction">
    <interactant intactId="EBI-908846">
        <id>Q13363</id>
    </interactant>
    <interactant intactId="EBI-2507362">
        <id>Q14526</id>
        <label>HIC1</label>
    </interactant>
    <organismsDiffer>false</organismsDiffer>
    <experiments>2</experiments>
</comment>
<comment type="interaction">
    <interactant intactId="EBI-908846">
        <id>Q13363</id>
    </interactant>
    <interactant intactId="EBI-7232405">
        <id>O43474</id>
        <label>KLF4</label>
    </interactant>
    <organismsDiffer>false</organismsDiffer>
    <experiments>4</experiments>
</comment>
<comment type="interaction">
    <interactant intactId="EBI-908846">
        <id>Q13363</id>
    </interactant>
    <interactant intactId="EBI-746045">
        <id>Q96JN0</id>
        <label>LCOR</label>
    </interactant>
    <organismsDiffer>false</organismsDiffer>
    <experiments>11</experiments>
</comment>
<comment type="interaction">
    <interactant intactId="EBI-908846">
        <id>Q13363</id>
    </interactant>
    <interactant intactId="EBI-7138654">
        <id>Q8N3X6</id>
        <label>LCORL</label>
    </interactant>
    <organismsDiffer>false</organismsDiffer>
    <experiments>7</experiments>
</comment>
<comment type="interaction">
    <interactant intactId="EBI-908846">
        <id>Q13363</id>
    </interactant>
    <interactant intactId="EBI-746484">
        <id>P48552</id>
        <label>NRIP1</label>
    </interactant>
    <organismsDiffer>false</organismsDiffer>
    <experiments>3</experiments>
</comment>
<comment type="interaction">
    <interactant intactId="EBI-908846">
        <id>Q13363</id>
    </interactant>
    <interactant intactId="EBI-746228">
        <id>Q9Y5P3</id>
        <label>RAI2</label>
    </interactant>
    <organismsDiffer>false</organismsDiffer>
    <experiments>3</experiments>
</comment>
<comment type="interaction">
    <interactant intactId="EBI-908846">
        <id>Q13363</id>
    </interactant>
    <interactant intactId="EBI-750109">
        <id>Q9NYB0</id>
        <label>TERF2IP</label>
    </interactant>
    <organismsDiffer>false</organismsDiffer>
    <experiments>2</experiments>
</comment>
<comment type="interaction">
    <interactant intactId="EBI-908846">
        <id>Q13363</id>
    </interactant>
    <interactant intactId="EBI-1790529">
        <id>Q96EK4</id>
        <label>THAP11</label>
    </interactant>
    <organismsDiffer>false</organismsDiffer>
    <experiments>4</experiments>
</comment>
<comment type="interaction">
    <interactant intactId="EBI-908846">
        <id>Q13363</id>
    </interactant>
    <interactant intactId="EBI-3232046">
        <id>Q99592</id>
        <label>ZBTB18</label>
    </interactant>
    <organismsDiffer>false</organismsDiffer>
    <experiments>7</experiments>
</comment>
<comment type="interaction">
    <interactant intactId="EBI-908846">
        <id>Q13363</id>
    </interactant>
    <interactant intactId="EBI-2813661">
        <id>Q8N895</id>
        <label>ZNF366</label>
    </interactant>
    <organismsDiffer>false</organismsDiffer>
    <experiments>5</experiments>
</comment>
<comment type="interaction">
    <interactant intactId="EBI-908846">
        <id>Q13363</id>
    </interactant>
    <interactant intactId="EBI-2799490">
        <id>Q92618</id>
        <label>ZNF516</label>
    </interactant>
    <organismsDiffer>false</organismsDiffer>
    <experiments>16</experiments>
</comment>
<comment type="interaction">
    <interactant intactId="EBI-908846">
        <id>Q13363</id>
    </interactant>
    <interactant intactId="EBI-6115394">
        <id>A2APF7</id>
        <label>Zbp1</label>
    </interactant>
    <organismsDiffer>true</organismsDiffer>
    <experiments>2</experiments>
</comment>
<comment type="interaction">
    <interactant intactId="EBI-10171858">
        <id>Q13363-2</id>
    </interactant>
    <interactant intactId="EBI-6083685">
        <id>Q9H6U6</id>
        <label>BCAS3</label>
    </interactant>
    <organismsDiffer>false</organismsDiffer>
    <experiments>3</experiments>
</comment>
<comment type="interaction">
    <interactant intactId="EBI-10171858">
        <id>Q13363-2</id>
    </interactant>
    <interactant intactId="EBI-745859">
        <id>P55273</id>
        <label>CDKN2D</label>
    </interactant>
    <organismsDiffer>false</organismsDiffer>
    <experiments>3</experiments>
</comment>
<comment type="interaction">
    <interactant intactId="EBI-10171858">
        <id>Q13363-2</id>
    </interactant>
    <interactant intactId="EBI-9051024">
        <id>Q76N32</id>
        <label>CEP68</label>
    </interactant>
    <organismsDiffer>false</organismsDiffer>
    <experiments>3</experiments>
</comment>
<comment type="interaction">
    <interactant intactId="EBI-10171858">
        <id>Q13363-2</id>
    </interactant>
    <interactant intactId="EBI-2212355">
        <id>Q49AN0</id>
        <label>CRY2</label>
    </interactant>
    <organismsDiffer>false</organismsDiffer>
    <experiments>3</experiments>
</comment>
<comment type="interaction">
    <interactant intactId="EBI-10171858">
        <id>Q13363-2</id>
    </interactant>
    <interactant intactId="EBI-10171858">
        <id>Q13363-2</id>
        <label>CTBP1</label>
    </interactant>
    <organismsDiffer>false</organismsDiffer>
    <experiments>5</experiments>
</comment>
<comment type="interaction">
    <interactant intactId="EBI-10171858">
        <id>Q13363-2</id>
    </interactant>
    <interactant intactId="EBI-741533">
        <id>P56545</id>
        <label>CTBP2</label>
    </interactant>
    <organismsDiffer>false</organismsDiffer>
    <experiments>5</experiments>
</comment>
<comment type="interaction">
    <interactant intactId="EBI-10171858">
        <id>Q13363-2</id>
    </interactant>
    <interactant intactId="EBI-10171902">
        <id>P56545-3</id>
        <label>CTBP2</label>
    </interactant>
    <organismsDiffer>false</organismsDiffer>
    <experiments>4</experiments>
</comment>
<comment type="interaction">
    <interactant intactId="EBI-10171858">
        <id>Q13363-2</id>
    </interactant>
    <interactant intactId="EBI-16431245">
        <id>A0A0S2Z5I3</id>
        <label>DMRTB1</label>
    </interactant>
    <organismsDiffer>false</organismsDiffer>
    <experiments>3</experiments>
</comment>
<comment type="interaction">
    <interactant intactId="EBI-10171858">
        <id>Q13363-2</id>
    </interactant>
    <interactant intactId="EBI-10178554">
        <id>I6L9A0</id>
        <label>DMRTB1</label>
    </interactant>
    <organismsDiffer>false</organismsDiffer>
    <experiments>3</experiments>
</comment>
<comment type="interaction">
    <interactant intactId="EBI-10171858">
        <id>Q13363-2</id>
    </interactant>
    <interactant intactId="EBI-983612">
        <id>O15409</id>
        <label>FOXP2</label>
    </interactant>
    <organismsDiffer>false</organismsDiffer>
    <experiments>7</experiments>
</comment>
<comment type="interaction">
    <interactant intactId="EBI-10171858">
        <id>Q13363-2</id>
    </interactant>
    <interactant intactId="EBI-3893317">
        <id>P09067</id>
        <label>HOXB5</label>
    </interactant>
    <organismsDiffer>false</organismsDiffer>
    <experiments>3</experiments>
</comment>
<comment type="interaction">
    <interactant intactId="EBI-10171858">
        <id>Q13363-2</id>
    </interactant>
    <interactant intactId="EBI-745305">
        <id>Q13422</id>
        <label>IKZF1</label>
    </interactant>
    <organismsDiffer>false</organismsDiffer>
    <experiments>3</experiments>
</comment>
<comment type="interaction">
    <interactant intactId="EBI-10171858">
        <id>Q13363-2</id>
    </interactant>
    <interactant intactId="EBI-11522367">
        <id>Q13422-7</id>
        <label>IKZF1</label>
    </interactant>
    <organismsDiffer>false</organismsDiffer>
    <experiments>5</experiments>
</comment>
<comment type="interaction">
    <interactant intactId="EBI-10171858">
        <id>Q13363-2</id>
    </interactant>
    <interactant intactId="EBI-750750">
        <id>Q9Y4X4</id>
        <label>KLF12</label>
    </interactant>
    <organismsDiffer>false</organismsDiffer>
    <experiments>6</experiments>
</comment>
<comment type="interaction">
    <interactant intactId="EBI-10171858">
        <id>Q13363-2</id>
    </interactant>
    <interactant intactId="EBI-8472267">
        <id>P57682</id>
        <label>KLF3</label>
    </interactant>
    <organismsDiffer>false</organismsDiffer>
    <experiments>3</experiments>
</comment>
<comment type="interaction">
    <interactant intactId="EBI-10171858">
        <id>Q13363-2</id>
    </interactant>
    <interactant intactId="EBI-713568">
        <id>P45984</id>
        <label>MAPK9</label>
    </interactant>
    <organismsDiffer>false</organismsDiffer>
    <experiments>3</experiments>
</comment>
<comment type="interaction">
    <interactant intactId="EBI-10171858">
        <id>Q13363-2</id>
    </interactant>
    <interactant intactId="EBI-10190763">
        <id>O94818-2</id>
        <label>NOL4</label>
    </interactant>
    <organismsDiffer>false</organismsDiffer>
    <experiments>4</experiments>
</comment>
<comment type="interaction">
    <interactant intactId="EBI-10171858">
        <id>Q13363-2</id>
    </interactant>
    <interactant intactId="EBI-6660790">
        <id>Q96MY1</id>
        <label>NOL4L</label>
    </interactant>
    <organismsDiffer>false</organismsDiffer>
    <experiments>3</experiments>
</comment>
<comment type="interaction">
    <interactant intactId="EBI-10171858">
        <id>Q13363-2</id>
    </interactant>
    <interactant intactId="EBI-3396023">
        <id>Q9NQ66</id>
        <label>PLCB1</label>
    </interactant>
    <organismsDiffer>false</organismsDiffer>
    <experiments>3</experiments>
</comment>
<comment type="interaction">
    <interactant intactId="EBI-10171858">
        <id>Q13363-2</id>
    </interactant>
    <interactant intactId="EBI-1181405">
        <id>Q13131</id>
        <label>PRKAA1</label>
    </interactant>
    <organismsDiffer>false</organismsDiffer>
    <experiments>3</experiments>
</comment>
<comment type="interaction">
    <interactant intactId="EBI-10171858">
        <id>Q13363-2</id>
    </interactant>
    <interactant intactId="EBI-714215">
        <id>Q15583</id>
        <label>TGIF1</label>
    </interactant>
    <organismsDiffer>false</organismsDiffer>
    <experiments>3</experiments>
</comment>
<comment type="interaction">
    <interactant intactId="EBI-10171858">
        <id>Q13363-2</id>
    </interactant>
    <interactant intactId="EBI-12691451">
        <id>Q15583-2</id>
        <label>TGIF1</label>
    </interactant>
    <organismsDiffer>false</organismsDiffer>
    <experiments>3</experiments>
</comment>
<comment type="interaction">
    <interactant intactId="EBI-10171858">
        <id>Q13363-2</id>
    </interactant>
    <interactant intactId="EBI-9053916">
        <id>Q63HK5</id>
        <label>TSHZ3</label>
    </interactant>
    <organismsDiffer>false</organismsDiffer>
    <experiments>3</experiments>
</comment>
<comment type="interaction">
    <interactant intactId="EBI-10171858">
        <id>Q13363-2</id>
    </interactant>
    <interactant intactId="EBI-3232046">
        <id>Q99592</id>
        <label>ZBTB18</label>
    </interactant>
    <organismsDiffer>false</organismsDiffer>
    <experiments>3</experiments>
</comment>
<comment type="subcellular location">
    <subcellularLocation>
        <location evidence="9">Cytoplasm</location>
    </subcellularLocation>
    <subcellularLocation>
        <location evidence="9">Nucleus</location>
    </subcellularLocation>
</comment>
<comment type="alternative products">
    <event type="alternative splicing"/>
    <isoform>
        <id>Q13363-1</id>
        <name>1</name>
        <sequence type="displayed"/>
    </isoform>
    <isoform>
        <id>Q13363-2</id>
        <name>2</name>
        <sequence type="described" ref="VSP_043305"/>
    </isoform>
</comment>
<comment type="tissue specificity">
    <text evidence="19">Expressed in germinal center B-cells.</text>
</comment>
<comment type="PTM">
    <text evidence="10 26">The level of phosphorylation appears to be regulated during the cell cycle. Phosphorylation by HIPK2 on Ser-422 induces proteasomal degradation.</text>
</comment>
<comment type="PTM">
    <text evidence="1">ADP-ribosylated; when cells are exposed to brefeldin A.</text>
</comment>
<comment type="PTM">
    <text evidence="9">Sumoylation on Lys-428 is promoted by the E3 SUMO-protein ligase CBX4.</text>
</comment>
<comment type="disease" evidence="24">
    <disease id="DI-05219">
        <name>Hypotonia, ataxia, developmental delay, and tooth enamel defect syndrome</name>
        <acronym>HADDTS</acronym>
        <description>An autosomal dominant disorder characterized by delayed motor development, intellectual disability, failure to thrive, hypotonia, ataxia, and tooth enamel defects.</description>
        <dbReference type="MIM" id="617915"/>
    </disease>
    <text>The disease is caused by variants affecting the gene represented in this entry.</text>
</comment>
<comment type="similarity">
    <text evidence="29">Belongs to the D-isomer specific 2-hydroxyacid dehydrogenase family.</text>
</comment>
<sequence>MGSSHLLNKGLPLGVRPPIMNGPLHPRPLVALLDGRDCTVEMPILKDVATVAFCDAQSTQEIHEKVLNEAVGALMYHTITLTREDLEKFKALRIIVRIGSGFDNIDIKSAGDLGIAVCNVPAASVEETADSTLCHILNLYRRATWLHQALREGTRVQSVEQIREVASGAARIRGETLGIIGLGRVGQAVALRAKAFGFNVLFYDPYLSDGVERALGLQRVSTLQDLLFHSDCVTLHCGLNEHNHHLINDFTVKQMRQGAFLVNTARGGLVDEKALAQALKEGRIRGAALDVHESEPFSFSQGPLKDAPNLICTPHAAWYSEQASIEMREEAAREIRRAITGRIPDSLKNCVNKDHLTAATHWASMDPAVVHPELNGAAYRYPPGVVGVAPTGIPAAVEGIVPSAMSLSHGLPPVAHPPHAPSPGQTVKPEADRDHASDQL</sequence>
<proteinExistence type="evidence at protein level"/>